<organism>
    <name type="scientific">Chlamydia trachomatis serovar L2 (strain ATCC VR-902B / DSM 19102 / 434/Bu)</name>
    <dbReference type="NCBI Taxonomy" id="471472"/>
    <lineage>
        <taxon>Bacteria</taxon>
        <taxon>Pseudomonadati</taxon>
        <taxon>Chlamydiota</taxon>
        <taxon>Chlamydiia</taxon>
        <taxon>Chlamydiales</taxon>
        <taxon>Chlamydiaceae</taxon>
        <taxon>Chlamydia/Chlamydophila group</taxon>
        <taxon>Chlamydia</taxon>
    </lineage>
</organism>
<feature type="chain" id="PRO_1000090978" description="Aspartate--tRNA(Asp/Asn) ligase">
    <location>
        <begin position="1"/>
        <end position="582"/>
    </location>
</feature>
<feature type="region of interest" description="Aspartate" evidence="1">
    <location>
        <begin position="201"/>
        <end position="204"/>
    </location>
</feature>
<feature type="binding site" evidence="1">
    <location>
        <position position="177"/>
    </location>
    <ligand>
        <name>L-aspartate</name>
        <dbReference type="ChEBI" id="CHEBI:29991"/>
    </ligand>
</feature>
<feature type="binding site" evidence="1">
    <location>
        <begin position="223"/>
        <end position="225"/>
    </location>
    <ligand>
        <name>ATP</name>
        <dbReference type="ChEBI" id="CHEBI:30616"/>
    </ligand>
</feature>
<feature type="binding site" evidence="1">
    <location>
        <position position="223"/>
    </location>
    <ligand>
        <name>L-aspartate</name>
        <dbReference type="ChEBI" id="CHEBI:29991"/>
    </ligand>
</feature>
<feature type="binding site" evidence="1">
    <location>
        <position position="232"/>
    </location>
    <ligand>
        <name>ATP</name>
        <dbReference type="ChEBI" id="CHEBI:30616"/>
    </ligand>
</feature>
<feature type="binding site" evidence="1">
    <location>
        <position position="447"/>
    </location>
    <ligand>
        <name>L-aspartate</name>
        <dbReference type="ChEBI" id="CHEBI:29991"/>
    </ligand>
</feature>
<feature type="binding site" evidence="1">
    <location>
        <position position="481"/>
    </location>
    <ligand>
        <name>ATP</name>
        <dbReference type="ChEBI" id="CHEBI:30616"/>
    </ligand>
</feature>
<feature type="binding site" evidence="1">
    <location>
        <position position="488"/>
    </location>
    <ligand>
        <name>L-aspartate</name>
        <dbReference type="ChEBI" id="CHEBI:29991"/>
    </ligand>
</feature>
<feature type="binding site" evidence="1">
    <location>
        <begin position="533"/>
        <end position="536"/>
    </location>
    <ligand>
        <name>ATP</name>
        <dbReference type="ChEBI" id="CHEBI:30616"/>
    </ligand>
</feature>
<feature type="site" description="Important for tRNA non-discrimination" evidence="1">
    <location>
        <position position="32"/>
    </location>
</feature>
<feature type="site" description="Important for tRNA non-discrimination" evidence="1">
    <location>
        <position position="84"/>
    </location>
</feature>
<dbReference type="EC" id="6.1.1.23" evidence="1"/>
<dbReference type="EMBL" id="AM884176">
    <property type="protein sequence ID" value="CAP04242.1"/>
    <property type="molecule type" value="Genomic_DNA"/>
</dbReference>
<dbReference type="RefSeq" id="WP_009873886.1">
    <property type="nucleotide sequence ID" value="NC_010287.1"/>
</dbReference>
<dbReference type="RefSeq" id="YP_001654875.1">
    <property type="nucleotide sequence ID" value="NC_010287.1"/>
</dbReference>
<dbReference type="SMR" id="B0B8B6"/>
<dbReference type="KEGG" id="ctb:CTL0804"/>
<dbReference type="PATRIC" id="fig|471472.4.peg.861"/>
<dbReference type="HOGENOM" id="CLU_014330_3_2_0"/>
<dbReference type="Proteomes" id="UP001154402">
    <property type="component" value="Chromosome"/>
</dbReference>
<dbReference type="GO" id="GO:0005737">
    <property type="term" value="C:cytoplasm"/>
    <property type="evidence" value="ECO:0007669"/>
    <property type="project" value="UniProtKB-SubCell"/>
</dbReference>
<dbReference type="GO" id="GO:0004815">
    <property type="term" value="F:aspartate-tRNA ligase activity"/>
    <property type="evidence" value="ECO:0007669"/>
    <property type="project" value="UniProtKB-UniRule"/>
</dbReference>
<dbReference type="GO" id="GO:0050560">
    <property type="term" value="F:aspartate-tRNA(Asn) ligase activity"/>
    <property type="evidence" value="ECO:0007669"/>
    <property type="project" value="UniProtKB-EC"/>
</dbReference>
<dbReference type="GO" id="GO:0005524">
    <property type="term" value="F:ATP binding"/>
    <property type="evidence" value="ECO:0007669"/>
    <property type="project" value="UniProtKB-UniRule"/>
</dbReference>
<dbReference type="GO" id="GO:0003676">
    <property type="term" value="F:nucleic acid binding"/>
    <property type="evidence" value="ECO:0007669"/>
    <property type="project" value="InterPro"/>
</dbReference>
<dbReference type="GO" id="GO:0006422">
    <property type="term" value="P:aspartyl-tRNA aminoacylation"/>
    <property type="evidence" value="ECO:0007669"/>
    <property type="project" value="UniProtKB-UniRule"/>
</dbReference>
<dbReference type="CDD" id="cd00777">
    <property type="entry name" value="AspRS_core"/>
    <property type="match status" value="1"/>
</dbReference>
<dbReference type="CDD" id="cd04317">
    <property type="entry name" value="EcAspRS_like_N"/>
    <property type="match status" value="1"/>
</dbReference>
<dbReference type="Gene3D" id="3.30.930.10">
    <property type="entry name" value="Bira Bifunctional Protein, Domain 2"/>
    <property type="match status" value="1"/>
</dbReference>
<dbReference type="Gene3D" id="3.30.1360.30">
    <property type="entry name" value="GAD-like domain"/>
    <property type="match status" value="1"/>
</dbReference>
<dbReference type="Gene3D" id="2.40.50.140">
    <property type="entry name" value="Nucleic acid-binding proteins"/>
    <property type="match status" value="1"/>
</dbReference>
<dbReference type="HAMAP" id="MF_00044">
    <property type="entry name" value="Asp_tRNA_synth_type1"/>
    <property type="match status" value="1"/>
</dbReference>
<dbReference type="InterPro" id="IPR004364">
    <property type="entry name" value="Aa-tRNA-synt_II"/>
</dbReference>
<dbReference type="InterPro" id="IPR006195">
    <property type="entry name" value="aa-tRNA-synth_II"/>
</dbReference>
<dbReference type="InterPro" id="IPR045864">
    <property type="entry name" value="aa-tRNA-synth_II/BPL/LPL"/>
</dbReference>
<dbReference type="InterPro" id="IPR004524">
    <property type="entry name" value="Asp-tRNA-ligase_1"/>
</dbReference>
<dbReference type="InterPro" id="IPR047089">
    <property type="entry name" value="Asp-tRNA-ligase_1_N"/>
</dbReference>
<dbReference type="InterPro" id="IPR002312">
    <property type="entry name" value="Asp/Asn-tRNA-synth_IIb"/>
</dbReference>
<dbReference type="InterPro" id="IPR047090">
    <property type="entry name" value="AspRS_core"/>
</dbReference>
<dbReference type="InterPro" id="IPR004115">
    <property type="entry name" value="GAD-like_sf"/>
</dbReference>
<dbReference type="InterPro" id="IPR029351">
    <property type="entry name" value="GAD_dom"/>
</dbReference>
<dbReference type="InterPro" id="IPR012340">
    <property type="entry name" value="NA-bd_OB-fold"/>
</dbReference>
<dbReference type="InterPro" id="IPR004365">
    <property type="entry name" value="NA-bd_OB_tRNA"/>
</dbReference>
<dbReference type="NCBIfam" id="TIGR00459">
    <property type="entry name" value="aspS_bact"/>
    <property type="match status" value="1"/>
</dbReference>
<dbReference type="NCBIfam" id="NF001750">
    <property type="entry name" value="PRK00476.1"/>
    <property type="match status" value="1"/>
</dbReference>
<dbReference type="PANTHER" id="PTHR22594:SF5">
    <property type="entry name" value="ASPARTATE--TRNA LIGASE, MITOCHONDRIAL"/>
    <property type="match status" value="1"/>
</dbReference>
<dbReference type="PANTHER" id="PTHR22594">
    <property type="entry name" value="ASPARTYL/LYSYL-TRNA SYNTHETASE"/>
    <property type="match status" value="1"/>
</dbReference>
<dbReference type="Pfam" id="PF02938">
    <property type="entry name" value="GAD"/>
    <property type="match status" value="1"/>
</dbReference>
<dbReference type="Pfam" id="PF00152">
    <property type="entry name" value="tRNA-synt_2"/>
    <property type="match status" value="1"/>
</dbReference>
<dbReference type="Pfam" id="PF01336">
    <property type="entry name" value="tRNA_anti-codon"/>
    <property type="match status" value="1"/>
</dbReference>
<dbReference type="PRINTS" id="PR01042">
    <property type="entry name" value="TRNASYNTHASP"/>
</dbReference>
<dbReference type="SUPFAM" id="SSF55681">
    <property type="entry name" value="Class II aaRS and biotin synthetases"/>
    <property type="match status" value="1"/>
</dbReference>
<dbReference type="SUPFAM" id="SSF55261">
    <property type="entry name" value="GAD domain-like"/>
    <property type="match status" value="1"/>
</dbReference>
<dbReference type="SUPFAM" id="SSF50249">
    <property type="entry name" value="Nucleic acid-binding proteins"/>
    <property type="match status" value="1"/>
</dbReference>
<dbReference type="PROSITE" id="PS50862">
    <property type="entry name" value="AA_TRNA_LIGASE_II"/>
    <property type="match status" value="1"/>
</dbReference>
<keyword id="KW-0030">Aminoacyl-tRNA synthetase</keyword>
<keyword id="KW-0067">ATP-binding</keyword>
<keyword id="KW-0963">Cytoplasm</keyword>
<keyword id="KW-0436">Ligase</keyword>
<keyword id="KW-0547">Nucleotide-binding</keyword>
<keyword id="KW-0648">Protein biosynthesis</keyword>
<proteinExistence type="inferred from homology"/>
<reference key="1">
    <citation type="journal article" date="2008" name="Genome Res.">
        <title>Chlamydia trachomatis: genome sequence analysis of lymphogranuloma venereum isolates.</title>
        <authorList>
            <person name="Thomson N.R."/>
            <person name="Holden M.T.G."/>
            <person name="Carder C."/>
            <person name="Lennard N."/>
            <person name="Lockey S.J."/>
            <person name="Marsh P."/>
            <person name="Skipp P."/>
            <person name="O'Connor C.D."/>
            <person name="Goodhead I."/>
            <person name="Norbertzcak H."/>
            <person name="Harris B."/>
            <person name="Ormond D."/>
            <person name="Rance R."/>
            <person name="Quail M.A."/>
            <person name="Parkhill J."/>
            <person name="Stephens R.S."/>
            <person name="Clarke I.N."/>
        </authorList>
    </citation>
    <scope>NUCLEOTIDE SEQUENCE [LARGE SCALE GENOMIC DNA]</scope>
    <source>
        <strain>ATCC VR-902B / DSM 19102 / 434/Bu</strain>
    </source>
</reference>
<gene>
    <name evidence="1" type="primary">aspS</name>
    <name type="ordered locus">CTL0804</name>
</gene>
<sequence>MKYRTHKCNELSLDHVGEHVRLSGWVHRYRNHGGVVFIDLRDRFGITQIVCRQEENPELHQLMDQVRSEWVLCVEGLVCARLEGMENPNLVTGSIEVEVSSLEVLSRAQNLPFSISDEHINVNEELRLTYRYLDMRRGDILDRLMCRHKVMLACRQYLDEQGFTEVVTPILGKSTPEGARDYLVPSRIYPGNFYALPQSPQLFKQILMVGGLDRYFQIATCFRDEDLRADRQPEFTQIDMEMSFGGPEDLFPVVEELVTRLFAVKGIELKAPFLRMTYQEAKDSYGTDKPDLRFGLRLKNCCEYARKFTFSIFLDQLAHGGTVKGFCVPGGADMSRKQLDIYTDFVKRYGSMGLVWIKKQDGGVSSNVAKFASEDVFQEMFEAFEAKDQDILLLIAAPEAVANQALDHLRRLIAKERQLYDSTQYNFVWITDFPLFAKEEGELCPEHHPFTAPLDEDISLLDSDPFAVRSSSYDLVLNGYEIASGSQRIHNPDLQNKIFALLKLSQESVKEKFGFFIDALSFGTPPHLGIALGLDRIMMVLTGAETIREVIAFPKTQKAGDLMMSAPSEILPIQLKELGLKL</sequence>
<protein>
    <recommendedName>
        <fullName evidence="1">Aspartate--tRNA(Asp/Asn) ligase</fullName>
        <ecNumber evidence="1">6.1.1.23</ecNumber>
    </recommendedName>
    <alternativeName>
        <fullName evidence="1">Aspartyl-tRNA synthetase</fullName>
        <shortName evidence="1">AspRS</shortName>
    </alternativeName>
    <alternativeName>
        <fullName evidence="1">Non-discriminating aspartyl-tRNA synthetase</fullName>
        <shortName evidence="1">ND-AspRS</shortName>
    </alternativeName>
</protein>
<evidence type="ECO:0000255" key="1">
    <source>
        <dbReference type="HAMAP-Rule" id="MF_00044"/>
    </source>
</evidence>
<accession>B0B8B6</accession>
<name>SYDND_CHLT2</name>
<comment type="function">
    <text evidence="1">Aspartyl-tRNA synthetase with relaxed tRNA specificity since it is able to aspartylate not only its cognate tRNA(Asp) but also tRNA(Asn). Reaction proceeds in two steps: L-aspartate is first activated by ATP to form Asp-AMP and then transferred to the acceptor end of tRNA(Asp/Asn).</text>
</comment>
<comment type="catalytic activity">
    <reaction evidence="1">
        <text>tRNA(Asx) + L-aspartate + ATP = L-aspartyl-tRNA(Asx) + AMP + diphosphate</text>
        <dbReference type="Rhea" id="RHEA:18349"/>
        <dbReference type="Rhea" id="RHEA-COMP:9710"/>
        <dbReference type="Rhea" id="RHEA-COMP:9711"/>
        <dbReference type="ChEBI" id="CHEBI:29991"/>
        <dbReference type="ChEBI" id="CHEBI:30616"/>
        <dbReference type="ChEBI" id="CHEBI:33019"/>
        <dbReference type="ChEBI" id="CHEBI:78442"/>
        <dbReference type="ChEBI" id="CHEBI:78516"/>
        <dbReference type="ChEBI" id="CHEBI:456215"/>
        <dbReference type="EC" id="6.1.1.23"/>
    </reaction>
</comment>
<comment type="subunit">
    <text evidence="1">Homodimer.</text>
</comment>
<comment type="subcellular location">
    <subcellularLocation>
        <location evidence="1">Cytoplasm</location>
    </subcellularLocation>
</comment>
<comment type="similarity">
    <text evidence="1">Belongs to the class-II aminoacyl-tRNA synthetase family. Type 1 subfamily.</text>
</comment>